<keyword id="KW-0238">DNA-binding</keyword>
<keyword id="KW-1185">Reference proteome</keyword>
<keyword id="KW-0677">Repeat</keyword>
<keyword id="KW-0804">Transcription</keyword>
<keyword id="KW-0805">Transcription regulation</keyword>
<gene>
    <name type="primary">tbp</name>
    <name type="ordered locus">MTH_1627</name>
</gene>
<comment type="function">
    <text evidence="1">General factor that plays a role in the activation of archaeal genes transcribed by RNA polymerase. Binds specifically to the TATA box promoter element which lies close to the position of transcription initiation (By similarity).</text>
</comment>
<comment type="similarity">
    <text evidence="2">Belongs to the TBP family.</text>
</comment>
<organism>
    <name type="scientific">Methanothermobacter thermautotrophicus (strain ATCC 29096 / DSM 1053 / JCM 10044 / NBRC 100330 / Delta H)</name>
    <name type="common">Methanobacterium thermoautotrophicum</name>
    <dbReference type="NCBI Taxonomy" id="187420"/>
    <lineage>
        <taxon>Archaea</taxon>
        <taxon>Methanobacteriati</taxon>
        <taxon>Methanobacteriota</taxon>
        <taxon>Methanomada group</taxon>
        <taxon>Methanobacteria</taxon>
        <taxon>Methanobacteriales</taxon>
        <taxon>Methanobacteriaceae</taxon>
        <taxon>Methanothermobacter</taxon>
    </lineage>
</organism>
<reference key="1">
    <citation type="journal article" date="1997" name="J. Bacteriol.">
        <title>Complete genome sequence of Methanobacterium thermoautotrophicum deltaH: functional analysis and comparative genomics.</title>
        <authorList>
            <person name="Smith D.R."/>
            <person name="Doucette-Stamm L.A."/>
            <person name="Deloughery C."/>
            <person name="Lee H.-M."/>
            <person name="Dubois J."/>
            <person name="Aldredge T."/>
            <person name="Bashirzadeh R."/>
            <person name="Blakely D."/>
            <person name="Cook R."/>
            <person name="Gilbert K."/>
            <person name="Harrison D."/>
            <person name="Hoang L."/>
            <person name="Keagle P."/>
            <person name="Lumm W."/>
            <person name="Pothier B."/>
            <person name="Qiu D."/>
            <person name="Spadafora R."/>
            <person name="Vicare R."/>
            <person name="Wang Y."/>
            <person name="Wierzbowski J."/>
            <person name="Gibson R."/>
            <person name="Jiwani N."/>
            <person name="Caruso A."/>
            <person name="Bush D."/>
            <person name="Safer H."/>
            <person name="Patwell D."/>
            <person name="Prabhakar S."/>
            <person name="McDougall S."/>
            <person name="Shimer G."/>
            <person name="Goyal A."/>
            <person name="Pietrovski S."/>
            <person name="Church G.M."/>
            <person name="Daniels C.J."/>
            <person name="Mao J.-I."/>
            <person name="Rice P."/>
            <person name="Noelling J."/>
            <person name="Reeve J.N."/>
        </authorList>
    </citation>
    <scope>NUCLEOTIDE SEQUENCE [LARGE SCALE GENOMIC DNA]</scope>
    <source>
        <strain>ATCC 29096 / DSM 1053 / JCM 10044 / NBRC 100330 / Delta H</strain>
    </source>
</reference>
<protein>
    <recommendedName>
        <fullName>TATA-box-binding protein</fullName>
    </recommendedName>
    <alternativeName>
        <fullName>Box A-binding protein</fullName>
        <shortName>BAP</shortName>
    </alternativeName>
    <alternativeName>
        <fullName>TATA sequence-binding protein</fullName>
        <shortName>TBP</shortName>
    </alternativeName>
    <alternativeName>
        <fullName>TATA-box factor</fullName>
    </alternativeName>
</protein>
<feature type="chain" id="PRO_0000154014" description="TATA-box-binding protein">
    <location>
        <begin position="1"/>
        <end position="181"/>
    </location>
</feature>
<feature type="repeat" description="1">
    <location>
        <begin position="8"/>
        <end position="84"/>
    </location>
</feature>
<feature type="repeat" description="2">
    <location>
        <begin position="99"/>
        <end position="175"/>
    </location>
</feature>
<sequence length="181" mass="19681">MTDVDIKIENIVASATLGKSIDLQTVAEALENVDFNREQFPGLVYKLKEPKTAALIFGSGKLVCTGAKSIEDSKRAIKLTVDMMRTMDPDIPEEFEIKIQNIVASANLGKPLNLEAVALGLENTEYEPEQFPGLVYRLDDPKVVLLLFGSGKVVCTGAKSAEDAKLGVEKTKARLAELDLI</sequence>
<accession>O27664</accession>
<proteinExistence type="inferred from homology"/>
<name>TBP_METTH</name>
<dbReference type="EMBL" id="AE000666">
    <property type="protein sequence ID" value="AAB86100.1"/>
    <property type="molecule type" value="Genomic_DNA"/>
</dbReference>
<dbReference type="PIR" id="D69084">
    <property type="entry name" value="D69084"/>
</dbReference>
<dbReference type="RefSeq" id="WP_010877235.1">
    <property type="nucleotide sequence ID" value="NC_000916.1"/>
</dbReference>
<dbReference type="SMR" id="O27664"/>
<dbReference type="FunCoup" id="O27664">
    <property type="interactions" value="139"/>
</dbReference>
<dbReference type="STRING" id="187420.MTH_1627"/>
<dbReference type="PaxDb" id="187420-MTH_1627"/>
<dbReference type="EnsemblBacteria" id="AAB86100">
    <property type="protein sequence ID" value="AAB86100"/>
    <property type="gene ID" value="MTH_1627"/>
</dbReference>
<dbReference type="KEGG" id="mth:MTH_1627"/>
<dbReference type="PATRIC" id="fig|187420.15.peg.1591"/>
<dbReference type="HOGENOM" id="CLU_060161_4_3_2"/>
<dbReference type="InParanoid" id="O27664"/>
<dbReference type="Proteomes" id="UP000005223">
    <property type="component" value="Chromosome"/>
</dbReference>
<dbReference type="GO" id="GO:0003677">
    <property type="term" value="F:DNA binding"/>
    <property type="evidence" value="ECO:0007669"/>
    <property type="project" value="UniProtKB-KW"/>
</dbReference>
<dbReference type="GO" id="GO:0003700">
    <property type="term" value="F:DNA-binding transcription factor activity"/>
    <property type="evidence" value="ECO:0007669"/>
    <property type="project" value="UniProtKB-UniRule"/>
</dbReference>
<dbReference type="GO" id="GO:0006352">
    <property type="term" value="P:DNA-templated transcription initiation"/>
    <property type="evidence" value="ECO:0007669"/>
    <property type="project" value="InterPro"/>
</dbReference>
<dbReference type="CDD" id="cd04518">
    <property type="entry name" value="TBP_archaea"/>
    <property type="match status" value="1"/>
</dbReference>
<dbReference type="FunFam" id="3.30.310.10:FF:000007">
    <property type="entry name" value="TATA-box-binding protein"/>
    <property type="match status" value="1"/>
</dbReference>
<dbReference type="Gene3D" id="3.30.310.10">
    <property type="entry name" value="TATA-Binding Protein"/>
    <property type="match status" value="2"/>
</dbReference>
<dbReference type="HAMAP" id="MF_00408">
    <property type="entry name" value="TATA_bind_prot_arch"/>
    <property type="match status" value="1"/>
</dbReference>
<dbReference type="InterPro" id="IPR000814">
    <property type="entry name" value="TBP"/>
</dbReference>
<dbReference type="InterPro" id="IPR033711">
    <property type="entry name" value="TBP_archaea"/>
</dbReference>
<dbReference type="InterPro" id="IPR030491">
    <property type="entry name" value="TBP_CS"/>
</dbReference>
<dbReference type="InterPro" id="IPR012295">
    <property type="entry name" value="TBP_dom_sf"/>
</dbReference>
<dbReference type="NCBIfam" id="NF001593">
    <property type="entry name" value="PRK00394.1-2"/>
    <property type="match status" value="1"/>
</dbReference>
<dbReference type="NCBIfam" id="NF001601">
    <property type="entry name" value="PRK00394.2-6"/>
    <property type="match status" value="1"/>
</dbReference>
<dbReference type="PANTHER" id="PTHR10126">
    <property type="entry name" value="TATA-BOX BINDING PROTEIN"/>
    <property type="match status" value="1"/>
</dbReference>
<dbReference type="Pfam" id="PF00352">
    <property type="entry name" value="TBP"/>
    <property type="match status" value="2"/>
</dbReference>
<dbReference type="PRINTS" id="PR00686">
    <property type="entry name" value="TIFACTORIID"/>
</dbReference>
<dbReference type="SUPFAM" id="SSF55945">
    <property type="entry name" value="TATA-box binding protein-like"/>
    <property type="match status" value="2"/>
</dbReference>
<dbReference type="PROSITE" id="PS00351">
    <property type="entry name" value="TFIID"/>
    <property type="match status" value="1"/>
</dbReference>
<evidence type="ECO:0000250" key="1"/>
<evidence type="ECO:0000305" key="2"/>